<sequence>MAAADIARQVGEDCRTVPLAGHVGFDSLPDQLVNKSVSQGFCFNILCVGETGLGKSTLMDTLFNTKFEGEPATHTQPGVQLQSNTYDLQESNVGLKLTIVSTVGFGDQINKEDSYKPIVEFIDAQFEAYLQEELKIRRVLHSYHDSRIHVCLYFIAPTGHSLKSLDLVTMKKLDSKVNIIPVIAKSDAISKSELAKFKIKITSELVSNGVQIYQFPTDDESVSEINGTMNAHLPFAVVGSTEEVKIGNKMMRARQYPWGTVQVENEAHCDFVKLREMLIRVNMEDLREQTHARHYELYRRCKLEEMGFKDTDPDSKPFSLQETYEAKRNEFLGELQKKEEEMRQMFVQRVKEKEAELKEAEKELHEKFDRLKKLHQEEKKKLEDKKKCLDEEMNAFKQRKAAAELLQSQGSQAGGSQTLKRDKEKKNNPWLCIE</sequence>
<dbReference type="EMBL" id="AB023622">
    <property type="protein sequence ID" value="BAA82838.1"/>
    <property type="molecule type" value="mRNA"/>
</dbReference>
<dbReference type="EMBL" id="AK012858">
    <property type="protein sequence ID" value="BAB28516.1"/>
    <property type="molecule type" value="mRNA"/>
</dbReference>
<dbReference type="EMBL" id="AK048455">
    <property type="protein sequence ID" value="BAC33342.1"/>
    <property type="molecule type" value="mRNA"/>
</dbReference>
<dbReference type="EMBL" id="AK088406">
    <property type="protein sequence ID" value="BAC40335.1"/>
    <property type="molecule type" value="mRNA"/>
</dbReference>
<dbReference type="EMBL" id="AK088614">
    <property type="protein sequence ID" value="BAC40453.1"/>
    <property type="molecule type" value="mRNA"/>
</dbReference>
<dbReference type="EMBL" id="AK160884">
    <property type="protein sequence ID" value="BAE36069.1"/>
    <property type="molecule type" value="mRNA"/>
</dbReference>
<dbReference type="EMBL" id="AK162755">
    <property type="protein sequence ID" value="BAE37050.1"/>
    <property type="molecule type" value="mRNA"/>
</dbReference>
<dbReference type="EMBL" id="AL450399">
    <property type="protein sequence ID" value="CAM19780.1"/>
    <property type="molecule type" value="Genomic_DNA"/>
</dbReference>
<dbReference type="EMBL" id="AL450399">
    <property type="protein sequence ID" value="CAM19781.1"/>
    <property type="molecule type" value="Genomic_DNA"/>
</dbReference>
<dbReference type="EMBL" id="AL450399">
    <property type="protein sequence ID" value="CAM19782.1"/>
    <property type="status" value="ALT_SEQ"/>
    <property type="molecule type" value="Genomic_DNA"/>
</dbReference>
<dbReference type="EMBL" id="BC010489">
    <property type="protein sequence ID" value="AAH10489.1"/>
    <property type="molecule type" value="mRNA"/>
</dbReference>
<dbReference type="EMBL" id="AK172894">
    <property type="protein sequence ID" value="BAD32172.1"/>
    <property type="status" value="ALT_INIT"/>
    <property type="molecule type" value="mRNA"/>
</dbReference>
<dbReference type="CCDS" id="CCDS30066.1">
    <molecule id="Q9R1T4-3"/>
</dbReference>
<dbReference type="CCDS" id="CCDS53051.1">
    <molecule id="Q9R1T4-1"/>
</dbReference>
<dbReference type="CCDS" id="CCDS57749.1">
    <molecule id="Q9R1T4-2"/>
</dbReference>
<dbReference type="RefSeq" id="NP_001170794.1">
    <property type="nucleotide sequence ID" value="NM_001177323.2"/>
</dbReference>
<dbReference type="RefSeq" id="NP_001170795.1">
    <molecule id="Q9R1T4-1"/>
    <property type="nucleotide sequence ID" value="NM_001177324.1"/>
</dbReference>
<dbReference type="RefSeq" id="NP_001240635.1">
    <molecule id="Q9R1T4-2"/>
    <property type="nucleotide sequence ID" value="NM_001253706.1"/>
</dbReference>
<dbReference type="RefSeq" id="NP_001346069.1">
    <molecule id="Q9R1T4-2"/>
    <property type="nucleotide sequence ID" value="NM_001359140.1"/>
</dbReference>
<dbReference type="RefSeq" id="NP_064326.2">
    <molecule id="Q9R1T4-3"/>
    <property type="nucleotide sequence ID" value="NM_019942.5"/>
</dbReference>
<dbReference type="RefSeq" id="XP_006541452.1">
    <property type="nucleotide sequence ID" value="XM_006541389.3"/>
</dbReference>
<dbReference type="RefSeq" id="XP_006541453.1">
    <molecule id="Q9R1T4-2"/>
    <property type="nucleotide sequence ID" value="XM_006541390.4"/>
</dbReference>
<dbReference type="SMR" id="Q9R1T4"/>
<dbReference type="BioGRID" id="208037">
    <property type="interactions" value="44"/>
</dbReference>
<dbReference type="FunCoup" id="Q9R1T4">
    <property type="interactions" value="356"/>
</dbReference>
<dbReference type="IntAct" id="Q9R1T4">
    <property type="interactions" value="27"/>
</dbReference>
<dbReference type="STRING" id="10090.ENSMUSP00000110894"/>
<dbReference type="GlyGen" id="Q9R1T4">
    <property type="glycosylation" value="1 site, 1 N-linked glycan (1 site)"/>
</dbReference>
<dbReference type="iPTMnet" id="Q9R1T4"/>
<dbReference type="PhosphoSitePlus" id="Q9R1T4"/>
<dbReference type="SwissPalm" id="Q9R1T4"/>
<dbReference type="jPOST" id="Q9R1T4"/>
<dbReference type="PaxDb" id="10090-ENSMUSP00000110894"/>
<dbReference type="PeptideAtlas" id="Q9R1T4"/>
<dbReference type="ProteomicsDB" id="261156">
    <molecule id="Q9R1T4-1"/>
</dbReference>
<dbReference type="ProteomicsDB" id="261157">
    <molecule id="Q9R1T4-2"/>
</dbReference>
<dbReference type="ProteomicsDB" id="261158">
    <molecule id="Q9R1T4-3"/>
</dbReference>
<dbReference type="Pumba" id="Q9R1T4"/>
<dbReference type="Antibodypedia" id="465">
    <property type="antibodies" value="292 antibodies from 35 providers"/>
</dbReference>
<dbReference type="DNASU" id="56526"/>
<dbReference type="Ensembl" id="ENSMUST00000053456.11">
    <molecule id="Q9R1T4-2"/>
    <property type="protein sequence ID" value="ENSMUSP00000054034.5"/>
    <property type="gene ID" value="ENSMUSG00000050379.16"/>
</dbReference>
<dbReference type="Ensembl" id="ENSMUST00000060474.14">
    <molecule id="Q9R1T4-3"/>
    <property type="protein sequence ID" value="ENSMUSP00000062014.8"/>
    <property type="gene ID" value="ENSMUSG00000050379.16"/>
</dbReference>
<dbReference type="Ensembl" id="ENSMUST00000115239.10">
    <molecule id="Q9R1T4-1"/>
    <property type="protein sequence ID" value="ENSMUSP00000110894.4"/>
    <property type="gene ID" value="ENSMUSG00000050379.16"/>
</dbReference>
<dbReference type="GeneID" id="56526"/>
<dbReference type="KEGG" id="mmu:56526"/>
<dbReference type="UCSC" id="uc009sxx.2">
    <molecule id="Q9R1T4-3"/>
    <property type="organism name" value="mouse"/>
</dbReference>
<dbReference type="UCSC" id="uc009sxz.2">
    <molecule id="Q9R1T4-1"/>
    <property type="organism name" value="mouse"/>
</dbReference>
<dbReference type="AGR" id="MGI:1888939"/>
<dbReference type="CTD" id="23157"/>
<dbReference type="MGI" id="MGI:1888939">
    <property type="gene designation" value="Septin6"/>
</dbReference>
<dbReference type="VEuPathDB" id="HostDB:ENSMUSG00000050379"/>
<dbReference type="eggNOG" id="KOG3859">
    <property type="taxonomic scope" value="Eukaryota"/>
</dbReference>
<dbReference type="GeneTree" id="ENSGT00940000158026"/>
<dbReference type="HOGENOM" id="CLU_017718_8_1_1"/>
<dbReference type="InParanoid" id="Q9R1T4"/>
<dbReference type="OMA" id="NNGIHIY"/>
<dbReference type="OrthoDB" id="416553at2759"/>
<dbReference type="PhylomeDB" id="Q9R1T4"/>
<dbReference type="TreeFam" id="TF101080"/>
<dbReference type="BioGRID-ORCS" id="56526">
    <property type="hits" value="1 hit in 51 CRISPR screens"/>
</dbReference>
<dbReference type="CD-CODE" id="CE726F99">
    <property type="entry name" value="Postsynaptic density"/>
</dbReference>
<dbReference type="ChiTaRS" id="Sept6">
    <property type="organism name" value="mouse"/>
</dbReference>
<dbReference type="PRO" id="PR:Q9R1T4"/>
<dbReference type="Proteomes" id="UP000000589">
    <property type="component" value="Chromosome X"/>
</dbReference>
<dbReference type="RNAct" id="Q9R1T4">
    <property type="molecule type" value="protein"/>
</dbReference>
<dbReference type="Bgee" id="ENSMUSG00000050379">
    <property type="expression patterns" value="Expressed in barrel cortex and 242 other cell types or tissues"/>
</dbReference>
<dbReference type="ExpressionAtlas" id="Q9R1T4">
    <property type="expression patterns" value="baseline and differential"/>
</dbReference>
<dbReference type="GO" id="GO:0043679">
    <property type="term" value="C:axon terminus"/>
    <property type="evidence" value="ECO:0000314"/>
    <property type="project" value="MGI"/>
</dbReference>
<dbReference type="GO" id="GO:0032154">
    <property type="term" value="C:cleavage furrow"/>
    <property type="evidence" value="ECO:0000314"/>
    <property type="project" value="MGI"/>
</dbReference>
<dbReference type="GO" id="GO:0000776">
    <property type="term" value="C:kinetochore"/>
    <property type="evidence" value="ECO:0007669"/>
    <property type="project" value="UniProtKB-KW"/>
</dbReference>
<dbReference type="GO" id="GO:0030496">
    <property type="term" value="C:midbody"/>
    <property type="evidence" value="ECO:0007669"/>
    <property type="project" value="UniProtKB-SubCell"/>
</dbReference>
<dbReference type="GO" id="GO:0098793">
    <property type="term" value="C:presynapse"/>
    <property type="evidence" value="ECO:0000314"/>
    <property type="project" value="SynGO"/>
</dbReference>
<dbReference type="GO" id="GO:0032173">
    <property type="term" value="C:septin collar"/>
    <property type="evidence" value="ECO:0000314"/>
    <property type="project" value="MGI"/>
</dbReference>
<dbReference type="GO" id="GO:0031105">
    <property type="term" value="C:septin complex"/>
    <property type="evidence" value="ECO:0000314"/>
    <property type="project" value="UniProtKB"/>
</dbReference>
<dbReference type="GO" id="GO:0005940">
    <property type="term" value="C:septin ring"/>
    <property type="evidence" value="ECO:0000314"/>
    <property type="project" value="MGI"/>
</dbReference>
<dbReference type="GO" id="GO:0097227">
    <property type="term" value="C:sperm annulus"/>
    <property type="evidence" value="ECO:0007669"/>
    <property type="project" value="Ensembl"/>
</dbReference>
<dbReference type="GO" id="GO:0005819">
    <property type="term" value="C:spindle"/>
    <property type="evidence" value="ECO:0007669"/>
    <property type="project" value="UniProtKB-SubCell"/>
</dbReference>
<dbReference type="GO" id="GO:0008021">
    <property type="term" value="C:synaptic vesicle"/>
    <property type="evidence" value="ECO:0000314"/>
    <property type="project" value="MGI"/>
</dbReference>
<dbReference type="GO" id="GO:0005525">
    <property type="term" value="F:GTP binding"/>
    <property type="evidence" value="ECO:0007669"/>
    <property type="project" value="UniProtKB-KW"/>
</dbReference>
<dbReference type="GO" id="GO:0030154">
    <property type="term" value="P:cell differentiation"/>
    <property type="evidence" value="ECO:0007669"/>
    <property type="project" value="UniProtKB-KW"/>
</dbReference>
<dbReference type="GO" id="GO:0051301">
    <property type="term" value="P:cell division"/>
    <property type="evidence" value="ECO:0007669"/>
    <property type="project" value="UniProtKB-KW"/>
</dbReference>
<dbReference type="GO" id="GO:0007283">
    <property type="term" value="P:spermatogenesis"/>
    <property type="evidence" value="ECO:0007669"/>
    <property type="project" value="UniProtKB-KW"/>
</dbReference>
<dbReference type="CDD" id="cd01850">
    <property type="entry name" value="CDC_Septin"/>
    <property type="match status" value="1"/>
</dbReference>
<dbReference type="FunFam" id="3.40.50.300:FF:000036">
    <property type="entry name" value="septin-6 isoform X2"/>
    <property type="match status" value="1"/>
</dbReference>
<dbReference type="Gene3D" id="3.40.50.300">
    <property type="entry name" value="P-loop containing nucleotide triphosphate hydrolases"/>
    <property type="match status" value="1"/>
</dbReference>
<dbReference type="InterPro" id="IPR030379">
    <property type="entry name" value="G_SEPTIN_dom"/>
</dbReference>
<dbReference type="InterPro" id="IPR027417">
    <property type="entry name" value="P-loop_NTPase"/>
</dbReference>
<dbReference type="InterPro" id="IPR016491">
    <property type="entry name" value="Septin"/>
</dbReference>
<dbReference type="PANTHER" id="PTHR18884">
    <property type="entry name" value="SEPTIN"/>
    <property type="match status" value="1"/>
</dbReference>
<dbReference type="Pfam" id="PF00735">
    <property type="entry name" value="Septin"/>
    <property type="match status" value="1"/>
</dbReference>
<dbReference type="PIRSF" id="PIRSF006698">
    <property type="entry name" value="Septin"/>
    <property type="match status" value="1"/>
</dbReference>
<dbReference type="SUPFAM" id="SSF52540">
    <property type="entry name" value="P-loop containing nucleoside triphosphate hydrolases"/>
    <property type="match status" value="1"/>
</dbReference>
<dbReference type="PROSITE" id="PS51719">
    <property type="entry name" value="G_SEPTIN"/>
    <property type="match status" value="1"/>
</dbReference>
<reference key="1">
    <citation type="submission" date="1999-02" db="EMBL/GenBank/DDBJ databases">
        <title>Identification of mouse Septin6 gene and its product.</title>
        <authorList>
            <person name="Kinoshita M."/>
        </authorList>
    </citation>
    <scope>NUCLEOTIDE SEQUENCE [MRNA] (ISOFORM V)</scope>
    <source>
        <strain>NIH Swiss</strain>
        <tissue>Heart</tissue>
    </source>
</reference>
<reference key="2">
    <citation type="journal article" date="2005" name="Science">
        <title>The transcriptional landscape of the mammalian genome.</title>
        <authorList>
            <person name="Carninci P."/>
            <person name="Kasukawa T."/>
            <person name="Katayama S."/>
            <person name="Gough J."/>
            <person name="Frith M.C."/>
            <person name="Maeda N."/>
            <person name="Oyama R."/>
            <person name="Ravasi T."/>
            <person name="Lenhard B."/>
            <person name="Wells C."/>
            <person name="Kodzius R."/>
            <person name="Shimokawa K."/>
            <person name="Bajic V.B."/>
            <person name="Brenner S.E."/>
            <person name="Batalov S."/>
            <person name="Forrest A.R."/>
            <person name="Zavolan M."/>
            <person name="Davis M.J."/>
            <person name="Wilming L.G."/>
            <person name="Aidinis V."/>
            <person name="Allen J.E."/>
            <person name="Ambesi-Impiombato A."/>
            <person name="Apweiler R."/>
            <person name="Aturaliya R.N."/>
            <person name="Bailey T.L."/>
            <person name="Bansal M."/>
            <person name="Baxter L."/>
            <person name="Beisel K.W."/>
            <person name="Bersano T."/>
            <person name="Bono H."/>
            <person name="Chalk A.M."/>
            <person name="Chiu K.P."/>
            <person name="Choudhary V."/>
            <person name="Christoffels A."/>
            <person name="Clutterbuck D.R."/>
            <person name="Crowe M.L."/>
            <person name="Dalla E."/>
            <person name="Dalrymple B.P."/>
            <person name="de Bono B."/>
            <person name="Della Gatta G."/>
            <person name="di Bernardo D."/>
            <person name="Down T."/>
            <person name="Engstrom P."/>
            <person name="Fagiolini M."/>
            <person name="Faulkner G."/>
            <person name="Fletcher C.F."/>
            <person name="Fukushima T."/>
            <person name="Furuno M."/>
            <person name="Futaki S."/>
            <person name="Gariboldi M."/>
            <person name="Georgii-Hemming P."/>
            <person name="Gingeras T.R."/>
            <person name="Gojobori T."/>
            <person name="Green R.E."/>
            <person name="Gustincich S."/>
            <person name="Harbers M."/>
            <person name="Hayashi Y."/>
            <person name="Hensch T.K."/>
            <person name="Hirokawa N."/>
            <person name="Hill D."/>
            <person name="Huminiecki L."/>
            <person name="Iacono M."/>
            <person name="Ikeo K."/>
            <person name="Iwama A."/>
            <person name="Ishikawa T."/>
            <person name="Jakt M."/>
            <person name="Kanapin A."/>
            <person name="Katoh M."/>
            <person name="Kawasawa Y."/>
            <person name="Kelso J."/>
            <person name="Kitamura H."/>
            <person name="Kitano H."/>
            <person name="Kollias G."/>
            <person name="Krishnan S.P."/>
            <person name="Kruger A."/>
            <person name="Kummerfeld S.K."/>
            <person name="Kurochkin I.V."/>
            <person name="Lareau L.F."/>
            <person name="Lazarevic D."/>
            <person name="Lipovich L."/>
            <person name="Liu J."/>
            <person name="Liuni S."/>
            <person name="McWilliam S."/>
            <person name="Madan Babu M."/>
            <person name="Madera M."/>
            <person name="Marchionni L."/>
            <person name="Matsuda H."/>
            <person name="Matsuzawa S."/>
            <person name="Miki H."/>
            <person name="Mignone F."/>
            <person name="Miyake S."/>
            <person name="Morris K."/>
            <person name="Mottagui-Tabar S."/>
            <person name="Mulder N."/>
            <person name="Nakano N."/>
            <person name="Nakauchi H."/>
            <person name="Ng P."/>
            <person name="Nilsson R."/>
            <person name="Nishiguchi S."/>
            <person name="Nishikawa S."/>
            <person name="Nori F."/>
            <person name="Ohara O."/>
            <person name="Okazaki Y."/>
            <person name="Orlando V."/>
            <person name="Pang K.C."/>
            <person name="Pavan W.J."/>
            <person name="Pavesi G."/>
            <person name="Pesole G."/>
            <person name="Petrovsky N."/>
            <person name="Piazza S."/>
            <person name="Reed J."/>
            <person name="Reid J.F."/>
            <person name="Ring B.Z."/>
            <person name="Ringwald M."/>
            <person name="Rost B."/>
            <person name="Ruan Y."/>
            <person name="Salzberg S.L."/>
            <person name="Sandelin A."/>
            <person name="Schneider C."/>
            <person name="Schoenbach C."/>
            <person name="Sekiguchi K."/>
            <person name="Semple C.A."/>
            <person name="Seno S."/>
            <person name="Sessa L."/>
            <person name="Sheng Y."/>
            <person name="Shibata Y."/>
            <person name="Shimada H."/>
            <person name="Shimada K."/>
            <person name="Silva D."/>
            <person name="Sinclair B."/>
            <person name="Sperling S."/>
            <person name="Stupka E."/>
            <person name="Sugiura K."/>
            <person name="Sultana R."/>
            <person name="Takenaka Y."/>
            <person name="Taki K."/>
            <person name="Tammoja K."/>
            <person name="Tan S.L."/>
            <person name="Tang S."/>
            <person name="Taylor M.S."/>
            <person name="Tegner J."/>
            <person name="Teichmann S.A."/>
            <person name="Ueda H.R."/>
            <person name="van Nimwegen E."/>
            <person name="Verardo R."/>
            <person name="Wei C.L."/>
            <person name="Yagi K."/>
            <person name="Yamanishi H."/>
            <person name="Zabarovsky E."/>
            <person name="Zhu S."/>
            <person name="Zimmer A."/>
            <person name="Hide W."/>
            <person name="Bult C."/>
            <person name="Grimmond S.M."/>
            <person name="Teasdale R.D."/>
            <person name="Liu E.T."/>
            <person name="Brusic V."/>
            <person name="Quackenbush J."/>
            <person name="Wahlestedt C."/>
            <person name="Mattick J.S."/>
            <person name="Hume D.A."/>
            <person name="Kai C."/>
            <person name="Sasaki D."/>
            <person name="Tomaru Y."/>
            <person name="Fukuda S."/>
            <person name="Kanamori-Katayama M."/>
            <person name="Suzuki M."/>
            <person name="Aoki J."/>
            <person name="Arakawa T."/>
            <person name="Iida J."/>
            <person name="Imamura K."/>
            <person name="Itoh M."/>
            <person name="Kato T."/>
            <person name="Kawaji H."/>
            <person name="Kawagashira N."/>
            <person name="Kawashima T."/>
            <person name="Kojima M."/>
            <person name="Kondo S."/>
            <person name="Konno H."/>
            <person name="Nakano K."/>
            <person name="Ninomiya N."/>
            <person name="Nishio T."/>
            <person name="Okada M."/>
            <person name="Plessy C."/>
            <person name="Shibata K."/>
            <person name="Shiraki T."/>
            <person name="Suzuki S."/>
            <person name="Tagami M."/>
            <person name="Waki K."/>
            <person name="Watahiki A."/>
            <person name="Okamura-Oho Y."/>
            <person name="Suzuki H."/>
            <person name="Kawai J."/>
            <person name="Hayashizaki Y."/>
        </authorList>
    </citation>
    <scope>NUCLEOTIDE SEQUENCE [LARGE SCALE MRNA] (ISOFORMS II AND V)</scope>
    <source>
        <strain>C57BL/6J</strain>
        <strain>NOD</strain>
        <tissue>Embryo</tissue>
        <tissue>Head</tissue>
        <tissue>Thymus</tissue>
    </source>
</reference>
<reference key="3">
    <citation type="journal article" date="2009" name="PLoS Biol.">
        <title>Lineage-specific biology revealed by a finished genome assembly of the mouse.</title>
        <authorList>
            <person name="Church D.M."/>
            <person name="Goodstadt L."/>
            <person name="Hillier L.W."/>
            <person name="Zody M.C."/>
            <person name="Goldstein S."/>
            <person name="She X."/>
            <person name="Bult C.J."/>
            <person name="Agarwala R."/>
            <person name="Cherry J.L."/>
            <person name="DiCuccio M."/>
            <person name="Hlavina W."/>
            <person name="Kapustin Y."/>
            <person name="Meric P."/>
            <person name="Maglott D."/>
            <person name="Birtle Z."/>
            <person name="Marques A.C."/>
            <person name="Graves T."/>
            <person name="Zhou S."/>
            <person name="Teague B."/>
            <person name="Potamousis K."/>
            <person name="Churas C."/>
            <person name="Place M."/>
            <person name="Herschleb J."/>
            <person name="Runnheim R."/>
            <person name="Forrest D."/>
            <person name="Amos-Landgraf J."/>
            <person name="Schwartz D.C."/>
            <person name="Cheng Z."/>
            <person name="Lindblad-Toh K."/>
            <person name="Eichler E.E."/>
            <person name="Ponting C.P."/>
        </authorList>
    </citation>
    <scope>NUCLEOTIDE SEQUENCE [LARGE SCALE GENOMIC DNA]</scope>
    <source>
        <strain>C57BL/6J</strain>
    </source>
</reference>
<reference key="4">
    <citation type="journal article" date="2004" name="Genome Res.">
        <title>The status, quality, and expansion of the NIH full-length cDNA project: the Mammalian Gene Collection (MGC).</title>
        <authorList>
            <consortium name="The MGC Project Team"/>
        </authorList>
    </citation>
    <scope>NUCLEOTIDE SEQUENCE [LARGE SCALE MRNA] (ISOFORM I)</scope>
    <source>
        <tissue>Salivary gland</tissue>
    </source>
</reference>
<reference key="5">
    <citation type="journal article" date="2004" name="DNA Res.">
        <title>Prediction of the coding sequences of mouse homologues of KIAA gene: IV. The complete nucleotide sequences of 500 mouse KIAA-homologous cDNAs identified by screening of terminal sequences of cDNA clones randomly sampled from size-fractionated libraries.</title>
        <authorList>
            <person name="Okazaki N."/>
            <person name="Kikuno R."/>
            <person name="Ohara R."/>
            <person name="Inamoto S."/>
            <person name="Koseki H."/>
            <person name="Hiraoka S."/>
            <person name="Saga Y."/>
            <person name="Seino S."/>
            <person name="Nishimura M."/>
            <person name="Kaisho T."/>
            <person name="Hoshino K."/>
            <person name="Kitamura H."/>
            <person name="Nagase T."/>
            <person name="Ohara O."/>
            <person name="Koga H."/>
        </authorList>
    </citation>
    <scope>NUCLEOTIDE SEQUENCE [LARGE SCALE MRNA] OF 1-427</scope>
    <source>
        <tissue>Fetal brain</tissue>
    </source>
</reference>
<reference key="6">
    <citation type="submission" date="2009-01" db="UniProtKB">
        <authorList>
            <person name="Lubec G."/>
            <person name="Klug S."/>
            <person name="Kang S.U."/>
            <person name="Sunyer B."/>
            <person name="Chen W.-Q."/>
        </authorList>
    </citation>
    <scope>PROTEIN SEQUENCE OF 16-111; 164-171; 177-185; 255-273; 281-287; 294-299; 310-337; 388-397 AND 400-420</scope>
    <scope>IDENTIFICATION BY MASS SPECTROMETRY</scope>
    <source>
        <strain>C57BL/6J</strain>
        <strain>OF1</strain>
        <tissue>Brain</tissue>
        <tissue>Hippocampus</tissue>
    </source>
</reference>
<reference key="7">
    <citation type="journal article" date="2000" name="J. Comp. Neurol.">
        <title>Differential localization of septins in the mouse brain.</title>
        <authorList>
            <person name="Kinoshita A."/>
            <person name="Noda M."/>
            <person name="Kinoshita M."/>
        </authorList>
    </citation>
    <scope>TISSUE SPECIFICITY</scope>
</reference>
<reference key="8">
    <citation type="journal article" date="2010" name="Cell">
        <title>A tissue-specific atlas of mouse protein phosphorylation and expression.</title>
        <authorList>
            <person name="Huttlin E.L."/>
            <person name="Jedrychowski M.P."/>
            <person name="Elias J.E."/>
            <person name="Goswami T."/>
            <person name="Rad R."/>
            <person name="Beausoleil S.A."/>
            <person name="Villen J."/>
            <person name="Haas W."/>
            <person name="Sowa M.E."/>
            <person name="Gygi S.P."/>
        </authorList>
    </citation>
    <scope>IDENTIFICATION BY MASS SPECTROMETRY [LARGE SCALE ANALYSIS]</scope>
    <source>
        <tissue>Brain</tissue>
        <tissue>Brown adipose tissue</tissue>
        <tissue>Heart</tissue>
        <tissue>Kidney</tissue>
        <tissue>Lung</tissue>
        <tissue>Spleen</tissue>
        <tissue>Testis</tissue>
    </source>
</reference>
<reference key="9">
    <citation type="journal article" date="2010" name="Mol. Biol. Cell">
        <title>Septin 14 is involved in cortical neuronal migration via interaction with Septin 4.</title>
        <authorList>
            <person name="Shinoda T."/>
            <person name="Ito H."/>
            <person name="Sudo K."/>
            <person name="Iwamoto I."/>
            <person name="Morishita R."/>
            <person name="Nagata K."/>
        </authorList>
    </citation>
    <scope>TISSUE SPECIFICITY</scope>
</reference>
<proteinExistence type="evidence at protein level"/>
<protein>
    <recommendedName>
        <fullName>Septin-6</fullName>
    </recommendedName>
</protein>
<keyword id="KW-0007">Acetylation</keyword>
<keyword id="KW-0025">Alternative splicing</keyword>
<keyword id="KW-0131">Cell cycle</keyword>
<keyword id="KW-0132">Cell division</keyword>
<keyword id="KW-0966">Cell projection</keyword>
<keyword id="KW-0137">Centromere</keyword>
<keyword id="KW-0158">Chromosome</keyword>
<keyword id="KW-0969">Cilium</keyword>
<keyword id="KW-0175">Coiled coil</keyword>
<keyword id="KW-0963">Cytoplasm</keyword>
<keyword id="KW-0206">Cytoskeleton</keyword>
<keyword id="KW-0221">Differentiation</keyword>
<keyword id="KW-0903">Direct protein sequencing</keyword>
<keyword id="KW-0282">Flagellum</keyword>
<keyword id="KW-0342">GTP-binding</keyword>
<keyword id="KW-0995">Kinetochore</keyword>
<keyword id="KW-0547">Nucleotide-binding</keyword>
<keyword id="KW-0597">Phosphoprotein</keyword>
<keyword id="KW-1185">Reference proteome</keyword>
<keyword id="KW-0744">Spermatogenesis</keyword>
<feature type="initiator methionine" description="Removed" evidence="2">
    <location>
        <position position="1"/>
    </location>
</feature>
<feature type="chain" id="PRO_0000173526" description="Septin-6">
    <location>
        <begin position="2"/>
        <end position="434"/>
    </location>
</feature>
<feature type="domain" description="Septin-type G" evidence="4">
    <location>
        <begin position="39"/>
        <end position="305"/>
    </location>
</feature>
<feature type="region of interest" description="G1 motif" evidence="4">
    <location>
        <begin position="49"/>
        <end position="56"/>
    </location>
</feature>
<feature type="region of interest" description="G3 motif" evidence="4">
    <location>
        <begin position="101"/>
        <end position="104"/>
    </location>
</feature>
<feature type="region of interest" description="G4 motif" evidence="4">
    <location>
        <begin position="184"/>
        <end position="187"/>
    </location>
</feature>
<feature type="region of interest" description="Disordered" evidence="5">
    <location>
        <begin position="403"/>
        <end position="434"/>
    </location>
</feature>
<feature type="coiled-coil region" evidence="3">
    <location>
        <begin position="321"/>
        <end position="407"/>
    </location>
</feature>
<feature type="compositionally biased region" description="Low complexity" evidence="5">
    <location>
        <begin position="407"/>
        <end position="417"/>
    </location>
</feature>
<feature type="binding site" evidence="1">
    <location>
        <begin position="49"/>
        <end position="56"/>
    </location>
    <ligand>
        <name>GTP</name>
        <dbReference type="ChEBI" id="CHEBI:37565"/>
    </ligand>
</feature>
<feature type="binding site" evidence="1">
    <location>
        <position position="104"/>
    </location>
    <ligand>
        <name>GTP</name>
        <dbReference type="ChEBI" id="CHEBI:37565"/>
    </ligand>
</feature>
<feature type="binding site" evidence="1">
    <location>
        <begin position="185"/>
        <end position="193"/>
    </location>
    <ligand>
        <name>GTP</name>
        <dbReference type="ChEBI" id="CHEBI:37565"/>
    </ligand>
</feature>
<feature type="binding site" evidence="1">
    <location>
        <position position="239"/>
    </location>
    <ligand>
        <name>GTP</name>
        <dbReference type="ChEBI" id="CHEBI:37565"/>
    </ligand>
</feature>
<feature type="binding site" evidence="1">
    <location>
        <position position="254"/>
    </location>
    <ligand>
        <name>GTP</name>
        <dbReference type="ChEBI" id="CHEBI:37565"/>
    </ligand>
</feature>
<feature type="modified residue" description="N-acetylalanine" evidence="2">
    <location>
        <position position="2"/>
    </location>
</feature>
<feature type="modified residue" description="Phosphoserine" evidence="2">
    <location>
        <position position="27"/>
    </location>
</feature>
<feature type="modified residue" description="N6-acetyllysine" evidence="2">
    <location>
        <position position="367"/>
    </location>
</feature>
<feature type="modified residue" description="Phosphoserine" evidence="2">
    <location>
        <position position="416"/>
    </location>
</feature>
<feature type="modified residue" description="Phosphothreonine" evidence="2">
    <location>
        <position position="418"/>
    </location>
</feature>
<feature type="splice variant" id="VSP_006055" description="In isoform I." evidence="9">
    <location>
        <begin position="428"/>
        <end position="434"/>
    </location>
</feature>
<feature type="splice variant" id="VSP_006056" description="In isoform V." evidence="10 11">
    <original>NPWLCIE</original>
    <variation>FF</variation>
    <location>
        <begin position="428"/>
        <end position="434"/>
    </location>
</feature>
<feature type="sequence conflict" description="In Ref. 2; BAB28516." evidence="12" ref="2">
    <original>V</original>
    <variation>L</variation>
    <location>
        <position position="10"/>
    </location>
</feature>
<feature type="sequence conflict" description="In Ref. 2; BAC33342." evidence="12" ref="2">
    <location>
        <position position="10"/>
    </location>
</feature>
<feature type="sequence conflict" description="In Ref. 2; BAC40335." evidence="12" ref="2">
    <original>L</original>
    <variation>P</variation>
    <location>
        <position position="62"/>
    </location>
</feature>
<feature type="sequence conflict" description="In Ref. 1; BAA82838." evidence="12" ref="1">
    <original>H</original>
    <variation>Y</variation>
    <location>
        <position position="141"/>
    </location>
</feature>
<feature type="sequence conflict" description="In Ref. 2; BAE36069." evidence="12" ref="2">
    <original>M</original>
    <variation>I</variation>
    <location>
        <position position="170"/>
    </location>
</feature>
<feature type="sequence conflict" description="In Ref. 2; BAB28516." evidence="12" ref="2">
    <original>VG</original>
    <variation>C</variation>
    <location>
        <begin position="238"/>
        <end position="239"/>
    </location>
</feature>
<feature type="sequence conflict" description="In Ref. 2; BAC40335." evidence="12" ref="2">
    <original>V</original>
    <variation>A</variation>
    <location>
        <position position="350"/>
    </location>
</feature>
<feature type="sequence conflict" description="In Ref. 1; BAA82838." evidence="12" ref="1">
    <original>A</original>
    <variation>R</variation>
    <location>
        <position position="403"/>
    </location>
</feature>
<gene>
    <name evidence="11" type="primary">Septin6</name>
    <name evidence="8" type="synonym">Kiaa0128</name>
    <name evidence="13" type="synonym">Sept6</name>
</gene>
<evidence type="ECO:0000250" key="1"/>
<evidence type="ECO:0000250" key="2">
    <source>
        <dbReference type="UniProtKB" id="Q14141"/>
    </source>
</evidence>
<evidence type="ECO:0000255" key="3"/>
<evidence type="ECO:0000255" key="4">
    <source>
        <dbReference type="PROSITE-ProRule" id="PRU01056"/>
    </source>
</evidence>
<evidence type="ECO:0000256" key="5">
    <source>
        <dbReference type="SAM" id="MobiDB-lite"/>
    </source>
</evidence>
<evidence type="ECO:0000269" key="6">
    <source>
    </source>
</evidence>
<evidence type="ECO:0000269" key="7">
    <source>
    </source>
</evidence>
<evidence type="ECO:0000303" key="8">
    <source>
    </source>
</evidence>
<evidence type="ECO:0000303" key="9">
    <source>
    </source>
</evidence>
<evidence type="ECO:0000303" key="10">
    <source>
    </source>
</evidence>
<evidence type="ECO:0000303" key="11">
    <source ref="1"/>
</evidence>
<evidence type="ECO:0000305" key="12"/>
<evidence type="ECO:0000312" key="13">
    <source>
        <dbReference type="MGI" id="MGI:1888939"/>
    </source>
</evidence>
<organism>
    <name type="scientific">Mus musculus</name>
    <name type="common">Mouse</name>
    <dbReference type="NCBI Taxonomy" id="10090"/>
    <lineage>
        <taxon>Eukaryota</taxon>
        <taxon>Metazoa</taxon>
        <taxon>Chordata</taxon>
        <taxon>Craniata</taxon>
        <taxon>Vertebrata</taxon>
        <taxon>Euteleostomi</taxon>
        <taxon>Mammalia</taxon>
        <taxon>Eutheria</taxon>
        <taxon>Euarchontoglires</taxon>
        <taxon>Glires</taxon>
        <taxon>Rodentia</taxon>
        <taxon>Myomorpha</taxon>
        <taxon>Muroidea</taxon>
        <taxon>Muridae</taxon>
        <taxon>Murinae</taxon>
        <taxon>Mus</taxon>
        <taxon>Mus</taxon>
    </lineage>
</organism>
<comment type="function">
    <text evidence="2">Filament-forming cytoskeletal GTPase. Required for normal organization of the actin cytoskeleton. Involved in cytokinesis. Forms a filamentous structure with SEPTIN12, SEPTIN6, SEPTIN2 and probably SEPTIN4 at the sperm annulus which is required for the structural integrity and motility of the sperm tail during postmeiotic differentiation (By similarity).</text>
</comment>
<comment type="subunit">
    <text evidence="1 2">Septins polymerize into heterooligomeric protein complexes that form filaments, and associate with cellular membranes, actin filaments and microtubules. GTPase activity is required for filament formation. Filaments are assembled from asymmetrical heterotrimers, composed of SEPTIN2, SEPTIN6 and SEPTIN7 that associate head-to-head to form a hexameric unit. Within the trimer, directly interacts with SEPTIN2 and SEPTIN7. Also interacts with SEPTIN9 and SEPTIN12. Interaction with SEPTIN12 alters filament structure. Component of a septin core octameric complex consisting of SEPTIN12, SEPTIN7, SEPTIN6 and SEPTIN2 or SEPTIN4 in the order 12-7-6-2-2-6-7-12 or 12-7-6-4-4-6-7-12 and located in the sperm annulus. Interacts with SOCS7. Interacts with HNRNPA1 (By similarity).</text>
</comment>
<comment type="subcellular location">
    <subcellularLocation>
        <location>Cytoplasm</location>
    </subcellularLocation>
    <subcellularLocation>
        <location>Cytoplasm</location>
        <location>Cytoskeleton</location>
        <location>Spindle</location>
    </subcellularLocation>
    <subcellularLocation>
        <location evidence="1">Chromosome</location>
        <location evidence="1">Centromere</location>
        <location evidence="1">Kinetochore</location>
    </subcellularLocation>
    <subcellularLocation>
        <location evidence="1">Cleavage furrow</location>
    </subcellularLocation>
    <subcellularLocation>
        <location evidence="1">Midbody</location>
    </subcellularLocation>
    <subcellularLocation>
        <location evidence="2">Cell projection</location>
        <location evidence="2">Cilium</location>
        <location evidence="2">Flagellum</location>
    </subcellularLocation>
    <text evidence="1 2">In metaphase cells, localized within the microtubule spindle. At the metaphase plate, in close apposition to the kinetochores of the congressed chromosomes. In cells undergoing cytokinesis, localized to the midbody, the ingressing cleavage furrow, and the central spindle. Found in the sperm annulus (By similarity).</text>
</comment>
<comment type="alternative products">
    <event type="alternative splicing"/>
    <isoform>
        <id>Q9R1T4-1</id>
        <name>II</name>
        <sequence type="displayed"/>
    </isoform>
    <isoform>
        <id>Q9R1T4-2</id>
        <name>I</name>
        <name>III</name>
        <sequence type="described" ref="VSP_006055"/>
    </isoform>
    <isoform>
        <id>Q9R1T4-3</id>
        <name>V</name>
        <sequence type="described" ref="VSP_006056"/>
    </isoform>
    <text>Additional isoforms seem to exist.</text>
</comment>
<comment type="tissue specificity">
    <text evidence="6 7">Expressed in the cerebral cortex (at protein level) (PubMed:20181826). Associated with synaptic vesicles in various brain regions, including glomeruli of the olfactory bulb (at protein level) (PubMed:11064363).</text>
</comment>
<comment type="miscellaneous">
    <text evidence="1">Coordinated expression with SEPT2 and SEPT7.</text>
</comment>
<comment type="similarity">
    <text evidence="4">Belongs to the TRAFAC class TrmE-Era-EngA-EngB-Septin-like GTPase superfamily. Septin GTPase family.</text>
</comment>
<comment type="sequence caution" evidence="12">
    <conflict type="erroneous initiation">
        <sequence resource="EMBL-CDS" id="BAD32172"/>
    </conflict>
</comment>
<comment type="sequence caution" evidence="12">
    <conflict type="erroneous gene model prediction">
        <sequence resource="EMBL-CDS" id="CAM19782"/>
    </conflict>
</comment>
<accession>Q9R1T4</accession>
<accession>A2A3V9</accession>
<accession>A2A3W0</accession>
<accession>Q3TRH9</accession>
<accession>Q3TUA2</accession>
<accession>Q542H3</accession>
<accession>Q6A0C4</accession>
<accession>Q8C2L2</accession>
<accession>Q8C848</accession>
<accession>Q91XH2</accession>
<accession>Q9CZ94</accession>
<name>SEPT6_MOUSE</name>